<accession>A4XUW4</accession>
<protein>
    <recommendedName>
        <fullName evidence="1">UvrABC system protein C</fullName>
        <shortName evidence="1">Protein UvrC</shortName>
    </recommendedName>
    <alternativeName>
        <fullName evidence="1">Excinuclease ABC subunit C</fullName>
    </alternativeName>
</protein>
<name>UVRC_ECTM1</name>
<comment type="function">
    <text evidence="1">The UvrABC repair system catalyzes the recognition and processing of DNA lesions. UvrC both incises the 5' and 3' sides of the lesion. The N-terminal half is responsible for the 3' incision and the C-terminal half is responsible for the 5' incision.</text>
</comment>
<comment type="subunit">
    <text evidence="1">Interacts with UvrB in an incision complex.</text>
</comment>
<comment type="subcellular location">
    <subcellularLocation>
        <location evidence="1">Cytoplasm</location>
    </subcellularLocation>
</comment>
<comment type="similarity">
    <text evidence="1">Belongs to the UvrC family.</text>
</comment>
<sequence length="607" mass="67399">MSVSFDSSAFLATCSGRPGVYRMFDADARLLYVGKAKNLKKRLSSYFRKTGQAPKTAALVARIAQVETTITANETEALLLEQTLIKEWRPPYNILLRDDKSYPYVFLSDGEFPRLGIHRGAKKAKGRYFGPYPSALAIRESLSLLQKTFLVRQCEDSYYRNRTRPCLQYQIKRCKGPCVGLVSPEEYAEDVRHSVMFLEGRSNALSEELSASMEKASMALEFERAAELRDQISMLRRVQDQQSMEGGSGDVDVVAVMLNPGGACVHLISVRGGRVLGSKNFFPQVAIEEEGGEVLMAFLAQYYLGNAERDLPSELIVNVQHEDFSTLIEAVESLRGRSLSISLRVRGTRARWQQLAVTNAEQALAARLANRQHLAERFEALATVLEMDEPPQRMECFDISHSSGEATVASCVVFGPEGPLKSDYRRFNIEGVTPGDDYAAMHQALTRRFSKIKDGEGKLPDVLLVDGGKGQLAMAREVLQELAVPDLILLGVAKGTTRKPGLEVLYLNDAEHEFTLPGNSPALHLIQQIRDESHRFAITGHRARRGKARRTSTLEEVAGIGPKRRRELLNHFGGLQELSRASAEEIAKAPGISKKLAELIYATLHSE</sequence>
<evidence type="ECO:0000255" key="1">
    <source>
        <dbReference type="HAMAP-Rule" id="MF_00203"/>
    </source>
</evidence>
<reference key="1">
    <citation type="submission" date="2007-04" db="EMBL/GenBank/DDBJ databases">
        <title>Complete sequence of Pseudomonas mendocina ymp.</title>
        <authorList>
            <consortium name="US DOE Joint Genome Institute"/>
            <person name="Copeland A."/>
            <person name="Lucas S."/>
            <person name="Lapidus A."/>
            <person name="Barry K."/>
            <person name="Glavina del Rio T."/>
            <person name="Dalin E."/>
            <person name="Tice H."/>
            <person name="Pitluck S."/>
            <person name="Kiss H."/>
            <person name="Brettin T."/>
            <person name="Detter J.C."/>
            <person name="Bruce D."/>
            <person name="Han C."/>
            <person name="Schmutz J."/>
            <person name="Larimer F."/>
            <person name="Land M."/>
            <person name="Hauser L."/>
            <person name="Kyrpides N."/>
            <person name="Mikhailova N."/>
            <person name="Hersman L."/>
            <person name="Dubois J."/>
            <person name="Maurice P."/>
            <person name="Richardson P."/>
        </authorList>
    </citation>
    <scope>NUCLEOTIDE SEQUENCE [LARGE SCALE GENOMIC DNA]</scope>
    <source>
        <strain>ymp</strain>
    </source>
</reference>
<gene>
    <name evidence="1" type="primary">uvrC</name>
    <name type="ordered locus">Pmen_2374</name>
</gene>
<proteinExistence type="inferred from homology"/>
<keyword id="KW-0963">Cytoplasm</keyword>
<keyword id="KW-0227">DNA damage</keyword>
<keyword id="KW-0228">DNA excision</keyword>
<keyword id="KW-0234">DNA repair</keyword>
<keyword id="KW-0267">Excision nuclease</keyword>
<keyword id="KW-0742">SOS response</keyword>
<dbReference type="EMBL" id="CP000680">
    <property type="protein sequence ID" value="ABP85130.1"/>
    <property type="molecule type" value="Genomic_DNA"/>
</dbReference>
<dbReference type="SMR" id="A4XUW4"/>
<dbReference type="STRING" id="399739.Pmen_2374"/>
<dbReference type="KEGG" id="pmy:Pmen_2374"/>
<dbReference type="PATRIC" id="fig|399739.8.peg.2395"/>
<dbReference type="eggNOG" id="COG0322">
    <property type="taxonomic scope" value="Bacteria"/>
</dbReference>
<dbReference type="HOGENOM" id="CLU_014841_3_0_6"/>
<dbReference type="OrthoDB" id="9804933at2"/>
<dbReference type="GO" id="GO:0005737">
    <property type="term" value="C:cytoplasm"/>
    <property type="evidence" value="ECO:0007669"/>
    <property type="project" value="UniProtKB-SubCell"/>
</dbReference>
<dbReference type="GO" id="GO:0009380">
    <property type="term" value="C:excinuclease repair complex"/>
    <property type="evidence" value="ECO:0007669"/>
    <property type="project" value="InterPro"/>
</dbReference>
<dbReference type="GO" id="GO:0003677">
    <property type="term" value="F:DNA binding"/>
    <property type="evidence" value="ECO:0007669"/>
    <property type="project" value="UniProtKB-UniRule"/>
</dbReference>
<dbReference type="GO" id="GO:0009381">
    <property type="term" value="F:excinuclease ABC activity"/>
    <property type="evidence" value="ECO:0007669"/>
    <property type="project" value="UniProtKB-UniRule"/>
</dbReference>
<dbReference type="GO" id="GO:0006289">
    <property type="term" value="P:nucleotide-excision repair"/>
    <property type="evidence" value="ECO:0007669"/>
    <property type="project" value="UniProtKB-UniRule"/>
</dbReference>
<dbReference type="GO" id="GO:0009432">
    <property type="term" value="P:SOS response"/>
    <property type="evidence" value="ECO:0007669"/>
    <property type="project" value="UniProtKB-UniRule"/>
</dbReference>
<dbReference type="CDD" id="cd10434">
    <property type="entry name" value="GIY-YIG_UvrC_Cho"/>
    <property type="match status" value="1"/>
</dbReference>
<dbReference type="FunFam" id="1.10.150.20:FF:000005">
    <property type="entry name" value="UvrABC system protein C"/>
    <property type="match status" value="1"/>
</dbReference>
<dbReference type="FunFam" id="3.30.420.340:FF:000001">
    <property type="entry name" value="UvrABC system protein C"/>
    <property type="match status" value="1"/>
</dbReference>
<dbReference type="FunFam" id="3.40.1440.10:FF:000001">
    <property type="entry name" value="UvrABC system protein C"/>
    <property type="match status" value="1"/>
</dbReference>
<dbReference type="Gene3D" id="1.10.150.20">
    <property type="entry name" value="5' to 3' exonuclease, C-terminal subdomain"/>
    <property type="match status" value="1"/>
</dbReference>
<dbReference type="Gene3D" id="3.40.1440.10">
    <property type="entry name" value="GIY-YIG endonuclease"/>
    <property type="match status" value="1"/>
</dbReference>
<dbReference type="Gene3D" id="4.10.860.10">
    <property type="entry name" value="UVR domain"/>
    <property type="match status" value="1"/>
</dbReference>
<dbReference type="Gene3D" id="3.30.420.340">
    <property type="entry name" value="UvrC, RNAse H endonuclease domain"/>
    <property type="match status" value="1"/>
</dbReference>
<dbReference type="HAMAP" id="MF_00203">
    <property type="entry name" value="UvrC"/>
    <property type="match status" value="1"/>
</dbReference>
<dbReference type="InterPro" id="IPR000305">
    <property type="entry name" value="GIY-YIG_endonuc"/>
</dbReference>
<dbReference type="InterPro" id="IPR035901">
    <property type="entry name" value="GIY-YIG_endonuc_sf"/>
</dbReference>
<dbReference type="InterPro" id="IPR047296">
    <property type="entry name" value="GIY-YIG_UvrC_Cho"/>
</dbReference>
<dbReference type="InterPro" id="IPR003583">
    <property type="entry name" value="Hlx-hairpin-Hlx_DNA-bd_motif"/>
</dbReference>
<dbReference type="InterPro" id="IPR010994">
    <property type="entry name" value="RuvA_2-like"/>
</dbReference>
<dbReference type="InterPro" id="IPR001943">
    <property type="entry name" value="UVR_dom"/>
</dbReference>
<dbReference type="InterPro" id="IPR036876">
    <property type="entry name" value="UVR_dom_sf"/>
</dbReference>
<dbReference type="InterPro" id="IPR050066">
    <property type="entry name" value="UvrABC_protein_C"/>
</dbReference>
<dbReference type="InterPro" id="IPR004791">
    <property type="entry name" value="UvrC"/>
</dbReference>
<dbReference type="InterPro" id="IPR001162">
    <property type="entry name" value="UvrC_RNase_H_dom"/>
</dbReference>
<dbReference type="InterPro" id="IPR038476">
    <property type="entry name" value="UvrC_RNase_H_dom_sf"/>
</dbReference>
<dbReference type="NCBIfam" id="NF001824">
    <property type="entry name" value="PRK00558.1-5"/>
    <property type="match status" value="1"/>
</dbReference>
<dbReference type="NCBIfam" id="TIGR00194">
    <property type="entry name" value="uvrC"/>
    <property type="match status" value="1"/>
</dbReference>
<dbReference type="PANTHER" id="PTHR30562:SF1">
    <property type="entry name" value="UVRABC SYSTEM PROTEIN C"/>
    <property type="match status" value="1"/>
</dbReference>
<dbReference type="PANTHER" id="PTHR30562">
    <property type="entry name" value="UVRC/OXIDOREDUCTASE"/>
    <property type="match status" value="1"/>
</dbReference>
<dbReference type="Pfam" id="PF01541">
    <property type="entry name" value="GIY-YIG"/>
    <property type="match status" value="1"/>
</dbReference>
<dbReference type="Pfam" id="PF14520">
    <property type="entry name" value="HHH_5"/>
    <property type="match status" value="1"/>
</dbReference>
<dbReference type="Pfam" id="PF02151">
    <property type="entry name" value="UVR"/>
    <property type="match status" value="1"/>
</dbReference>
<dbReference type="Pfam" id="PF22920">
    <property type="entry name" value="UvrC_RNaseH"/>
    <property type="match status" value="1"/>
</dbReference>
<dbReference type="Pfam" id="PF08459">
    <property type="entry name" value="UvrC_RNaseH_dom"/>
    <property type="match status" value="1"/>
</dbReference>
<dbReference type="SMART" id="SM00465">
    <property type="entry name" value="GIYc"/>
    <property type="match status" value="1"/>
</dbReference>
<dbReference type="SMART" id="SM00278">
    <property type="entry name" value="HhH1"/>
    <property type="match status" value="2"/>
</dbReference>
<dbReference type="SUPFAM" id="SSF46600">
    <property type="entry name" value="C-terminal UvrC-binding domain of UvrB"/>
    <property type="match status" value="1"/>
</dbReference>
<dbReference type="SUPFAM" id="SSF82771">
    <property type="entry name" value="GIY-YIG endonuclease"/>
    <property type="match status" value="1"/>
</dbReference>
<dbReference type="SUPFAM" id="SSF47781">
    <property type="entry name" value="RuvA domain 2-like"/>
    <property type="match status" value="1"/>
</dbReference>
<dbReference type="PROSITE" id="PS50164">
    <property type="entry name" value="GIY_YIG"/>
    <property type="match status" value="1"/>
</dbReference>
<dbReference type="PROSITE" id="PS50151">
    <property type="entry name" value="UVR"/>
    <property type="match status" value="1"/>
</dbReference>
<dbReference type="PROSITE" id="PS50165">
    <property type="entry name" value="UVRC"/>
    <property type="match status" value="1"/>
</dbReference>
<feature type="chain" id="PRO_1000077821" description="UvrABC system protein C">
    <location>
        <begin position="1"/>
        <end position="607"/>
    </location>
</feature>
<feature type="domain" description="GIY-YIG" evidence="1">
    <location>
        <begin position="16"/>
        <end position="94"/>
    </location>
</feature>
<feature type="domain" description="UVR" evidence="1">
    <location>
        <begin position="203"/>
        <end position="238"/>
    </location>
</feature>
<organism>
    <name type="scientific">Ectopseudomonas mendocina (strain ymp)</name>
    <name type="common">Pseudomonas mendocina</name>
    <dbReference type="NCBI Taxonomy" id="399739"/>
    <lineage>
        <taxon>Bacteria</taxon>
        <taxon>Pseudomonadati</taxon>
        <taxon>Pseudomonadota</taxon>
        <taxon>Gammaproteobacteria</taxon>
        <taxon>Pseudomonadales</taxon>
        <taxon>Pseudomonadaceae</taxon>
        <taxon>Ectopseudomonas</taxon>
    </lineage>
</organism>